<dbReference type="EMBL" id="AE016818">
    <property type="protein sequence ID" value="AAS52814.1"/>
    <property type="molecule type" value="Genomic_DNA"/>
</dbReference>
<dbReference type="RefSeq" id="NP_984990.1">
    <property type="nucleotide sequence ID" value="NM_210344.1"/>
</dbReference>
<dbReference type="SMR" id="Q756Y3"/>
<dbReference type="FunCoup" id="Q756Y3">
    <property type="interactions" value="1467"/>
</dbReference>
<dbReference type="STRING" id="284811.Q756Y3"/>
<dbReference type="EnsemblFungi" id="AAS52814">
    <property type="protein sequence ID" value="AAS52814"/>
    <property type="gene ID" value="AGOS_AER131C"/>
</dbReference>
<dbReference type="GeneID" id="4621196"/>
<dbReference type="KEGG" id="ago:AGOS_AER131C"/>
<dbReference type="eggNOG" id="KOG1628">
    <property type="taxonomic scope" value="Eukaryota"/>
</dbReference>
<dbReference type="HOGENOM" id="CLU_062507_0_0_1"/>
<dbReference type="InParanoid" id="Q756Y3"/>
<dbReference type="OMA" id="TRFKGHE"/>
<dbReference type="OrthoDB" id="9834376at2759"/>
<dbReference type="Proteomes" id="UP000000591">
    <property type="component" value="Chromosome V"/>
</dbReference>
<dbReference type="GO" id="GO:0005829">
    <property type="term" value="C:cytosol"/>
    <property type="evidence" value="ECO:0000318"/>
    <property type="project" value="GO_Central"/>
</dbReference>
<dbReference type="GO" id="GO:0022627">
    <property type="term" value="C:cytosolic small ribosomal subunit"/>
    <property type="evidence" value="ECO:0007669"/>
    <property type="project" value="UniProtKB-UniRule"/>
</dbReference>
<dbReference type="GO" id="GO:0003735">
    <property type="term" value="F:structural constituent of ribosome"/>
    <property type="evidence" value="ECO:0007669"/>
    <property type="project" value="UniProtKB-UniRule"/>
</dbReference>
<dbReference type="GO" id="GO:0006412">
    <property type="term" value="P:translation"/>
    <property type="evidence" value="ECO:0007669"/>
    <property type="project" value="UniProtKB-UniRule"/>
</dbReference>
<dbReference type="HAMAP" id="MF_03122">
    <property type="entry name" value="Ribosomal_eS1_euk"/>
    <property type="match status" value="1"/>
</dbReference>
<dbReference type="InterPro" id="IPR001593">
    <property type="entry name" value="Ribosomal_eS1"/>
</dbReference>
<dbReference type="InterPro" id="IPR018281">
    <property type="entry name" value="Ribosomal_eS1_CS"/>
</dbReference>
<dbReference type="InterPro" id="IPR027500">
    <property type="entry name" value="Ribosomal_eS1_euk"/>
</dbReference>
<dbReference type="PANTHER" id="PTHR11830">
    <property type="entry name" value="40S RIBOSOMAL PROTEIN S3A"/>
    <property type="match status" value="1"/>
</dbReference>
<dbReference type="Pfam" id="PF01015">
    <property type="entry name" value="Ribosomal_S3Ae"/>
    <property type="match status" value="1"/>
</dbReference>
<dbReference type="SMART" id="SM01397">
    <property type="entry name" value="Ribosomal_S3Ae"/>
    <property type="match status" value="1"/>
</dbReference>
<dbReference type="PROSITE" id="PS01191">
    <property type="entry name" value="RIBOSOMAL_S3AE"/>
    <property type="match status" value="1"/>
</dbReference>
<keyword id="KW-0007">Acetylation</keyword>
<keyword id="KW-0963">Cytoplasm</keyword>
<keyword id="KW-1185">Reference proteome</keyword>
<keyword id="KW-0687">Ribonucleoprotein</keyword>
<keyword id="KW-0689">Ribosomal protein</keyword>
<comment type="subunit">
    <text evidence="1">Component of the small ribosomal subunit. Mature ribosomes consist of a small (40S) and a large (60S) subunit. The 40S subunit contains about 33 different proteins and 1 molecule of RNA (18S). The 60S subunit contains about 49 different proteins and 3 molecules of RNA (25S, 5.8S and 5S).</text>
</comment>
<comment type="subcellular location">
    <subcellularLocation>
        <location evidence="1">Cytoplasm</location>
    </subcellularLocation>
</comment>
<comment type="similarity">
    <text evidence="1">Belongs to the eukaryotic ribosomal protein eS1 family.</text>
</comment>
<sequence>MAVGKNKRLSKGKKGLKKKVVDPFTRKEWYDIKAPSTFENRNVGKTLVNKSTGLKNAADFLKGRVVEVCLADLQGSEDHSFRKVKLRVDEVQGKNLLTNFHGLDFTTDKLRSMVRKWQTLIEANVTVKTADDYVLRVFAIAFTRRQSNQIKKTSYAQSSHIRAIRKVISEILTREVQNATLAQLTSKLIPEVINKEIENATKDIFPLQNVHIRKVKLLKQPKFDLGALMTLHGESSGEEKGKKVAGGFKDEILETV</sequence>
<organism>
    <name type="scientific">Eremothecium gossypii (strain ATCC 10895 / CBS 109.51 / FGSC 9923 / NRRL Y-1056)</name>
    <name type="common">Yeast</name>
    <name type="synonym">Ashbya gossypii</name>
    <dbReference type="NCBI Taxonomy" id="284811"/>
    <lineage>
        <taxon>Eukaryota</taxon>
        <taxon>Fungi</taxon>
        <taxon>Dikarya</taxon>
        <taxon>Ascomycota</taxon>
        <taxon>Saccharomycotina</taxon>
        <taxon>Saccharomycetes</taxon>
        <taxon>Saccharomycetales</taxon>
        <taxon>Saccharomycetaceae</taxon>
        <taxon>Eremothecium</taxon>
    </lineage>
</organism>
<protein>
    <recommendedName>
        <fullName evidence="1">Small ribosomal subunit protein eS1</fullName>
    </recommendedName>
    <alternativeName>
        <fullName evidence="2">40S ribosomal protein S1</fullName>
    </alternativeName>
</protein>
<evidence type="ECO:0000255" key="1">
    <source>
        <dbReference type="HAMAP-Rule" id="MF_03122"/>
    </source>
</evidence>
<evidence type="ECO:0000305" key="2"/>
<feature type="initiator methionine" description="Removed" evidence="1">
    <location>
        <position position="1"/>
    </location>
</feature>
<feature type="chain" id="PRO_0000389355" description="Small ribosomal subunit protein eS1">
    <location>
        <begin position="2"/>
        <end position="256"/>
    </location>
</feature>
<feature type="modified residue" description="N-acetylalanine; partial" evidence="1">
    <location>
        <position position="2"/>
    </location>
</feature>
<name>RS3A_EREGS</name>
<reference key="1">
    <citation type="journal article" date="2004" name="Science">
        <title>The Ashbya gossypii genome as a tool for mapping the ancient Saccharomyces cerevisiae genome.</title>
        <authorList>
            <person name="Dietrich F.S."/>
            <person name="Voegeli S."/>
            <person name="Brachat S."/>
            <person name="Lerch A."/>
            <person name="Gates K."/>
            <person name="Steiner S."/>
            <person name="Mohr C."/>
            <person name="Poehlmann R."/>
            <person name="Luedi P."/>
            <person name="Choi S."/>
            <person name="Wing R.A."/>
            <person name="Flavier A."/>
            <person name="Gaffney T.D."/>
            <person name="Philippsen P."/>
        </authorList>
    </citation>
    <scope>NUCLEOTIDE SEQUENCE [LARGE SCALE GENOMIC DNA]</scope>
    <source>
        <strain>ATCC 10895 / CBS 109.51 / FGSC 9923 / NRRL Y-1056</strain>
    </source>
</reference>
<reference key="2">
    <citation type="journal article" date="2013" name="G3 (Bethesda)">
        <title>Genomes of Ashbya fungi isolated from insects reveal four mating-type loci, numerous translocations, lack of transposons, and distinct gene duplications.</title>
        <authorList>
            <person name="Dietrich F.S."/>
            <person name="Voegeli S."/>
            <person name="Kuo S."/>
            <person name="Philippsen P."/>
        </authorList>
    </citation>
    <scope>GENOME REANNOTATION</scope>
    <source>
        <strain>ATCC 10895 / CBS 109.51 / FGSC 9923 / NRRL Y-1056</strain>
    </source>
</reference>
<accession>Q756Y3</accession>
<gene>
    <name evidence="1" type="primary">RPS1</name>
    <name type="ordered locus">AER131C</name>
</gene>
<proteinExistence type="inferred from homology"/>